<proteinExistence type="inferred from homology"/>
<dbReference type="EC" id="6.3.3.3" evidence="1"/>
<dbReference type="EMBL" id="AM180252">
    <property type="protein sequence ID" value="CAJ54479.1"/>
    <property type="molecule type" value="Genomic_DNA"/>
</dbReference>
<dbReference type="RefSeq" id="WP_011526509.1">
    <property type="nucleotide sequence ID" value="NC_008011.1"/>
</dbReference>
<dbReference type="SMR" id="Q1MR97"/>
<dbReference type="STRING" id="363253.LI0425"/>
<dbReference type="KEGG" id="lip:LI0425"/>
<dbReference type="eggNOG" id="COG0132">
    <property type="taxonomic scope" value="Bacteria"/>
</dbReference>
<dbReference type="HOGENOM" id="CLU_072551_2_0_7"/>
<dbReference type="OrthoDB" id="9802097at2"/>
<dbReference type="UniPathway" id="UPA00078">
    <property type="reaction ID" value="UER00161"/>
</dbReference>
<dbReference type="Proteomes" id="UP000002430">
    <property type="component" value="Chromosome"/>
</dbReference>
<dbReference type="GO" id="GO:0005829">
    <property type="term" value="C:cytosol"/>
    <property type="evidence" value="ECO:0007669"/>
    <property type="project" value="TreeGrafter"/>
</dbReference>
<dbReference type="GO" id="GO:0005524">
    <property type="term" value="F:ATP binding"/>
    <property type="evidence" value="ECO:0007669"/>
    <property type="project" value="UniProtKB-UniRule"/>
</dbReference>
<dbReference type="GO" id="GO:0004141">
    <property type="term" value="F:dethiobiotin synthase activity"/>
    <property type="evidence" value="ECO:0007669"/>
    <property type="project" value="UniProtKB-UniRule"/>
</dbReference>
<dbReference type="GO" id="GO:0000287">
    <property type="term" value="F:magnesium ion binding"/>
    <property type="evidence" value="ECO:0007669"/>
    <property type="project" value="UniProtKB-UniRule"/>
</dbReference>
<dbReference type="GO" id="GO:0009102">
    <property type="term" value="P:biotin biosynthetic process"/>
    <property type="evidence" value="ECO:0007669"/>
    <property type="project" value="UniProtKB-UniRule"/>
</dbReference>
<dbReference type="CDD" id="cd03109">
    <property type="entry name" value="DTBS"/>
    <property type="match status" value="1"/>
</dbReference>
<dbReference type="Gene3D" id="3.40.50.300">
    <property type="entry name" value="P-loop containing nucleotide triphosphate hydrolases"/>
    <property type="match status" value="1"/>
</dbReference>
<dbReference type="HAMAP" id="MF_00336">
    <property type="entry name" value="BioD"/>
    <property type="match status" value="1"/>
</dbReference>
<dbReference type="InterPro" id="IPR004472">
    <property type="entry name" value="DTB_synth_BioD"/>
</dbReference>
<dbReference type="InterPro" id="IPR027417">
    <property type="entry name" value="P-loop_NTPase"/>
</dbReference>
<dbReference type="NCBIfam" id="TIGR00347">
    <property type="entry name" value="bioD"/>
    <property type="match status" value="1"/>
</dbReference>
<dbReference type="PANTHER" id="PTHR43210">
    <property type="entry name" value="DETHIOBIOTIN SYNTHETASE"/>
    <property type="match status" value="1"/>
</dbReference>
<dbReference type="PANTHER" id="PTHR43210:SF5">
    <property type="entry name" value="DETHIOBIOTIN SYNTHETASE"/>
    <property type="match status" value="1"/>
</dbReference>
<dbReference type="Pfam" id="PF13500">
    <property type="entry name" value="AAA_26"/>
    <property type="match status" value="1"/>
</dbReference>
<dbReference type="PIRSF" id="PIRSF006755">
    <property type="entry name" value="DTB_synth"/>
    <property type="match status" value="1"/>
</dbReference>
<dbReference type="SUPFAM" id="SSF52540">
    <property type="entry name" value="P-loop containing nucleoside triphosphate hydrolases"/>
    <property type="match status" value="1"/>
</dbReference>
<reference key="1">
    <citation type="submission" date="2005-11" db="EMBL/GenBank/DDBJ databases">
        <title>The complete genome sequence of Lawsonia intracellularis: the causative agent of proliferative enteropathy.</title>
        <authorList>
            <person name="Kaur K."/>
            <person name="Zhang Q."/>
            <person name="Beckler D."/>
            <person name="Munir S."/>
            <person name="Li L."/>
            <person name="Kinsley K."/>
            <person name="Herron L."/>
            <person name="Peterson A."/>
            <person name="May B."/>
            <person name="Singh S."/>
            <person name="Gebhart C."/>
            <person name="Kapur V."/>
        </authorList>
    </citation>
    <scope>NUCLEOTIDE SEQUENCE [LARGE SCALE GENOMIC DNA]</scope>
    <source>
        <strain>PHE/MN1-00</strain>
    </source>
</reference>
<gene>
    <name evidence="1" type="primary">bioD</name>
    <name type="ordered locus">LI0425</name>
</gene>
<protein>
    <recommendedName>
        <fullName evidence="1">ATP-dependent dethiobiotin synthetase BioD</fullName>
        <ecNumber evidence="1">6.3.3.3</ecNumber>
    </recommendedName>
    <alternativeName>
        <fullName evidence="1">DTB synthetase</fullName>
        <shortName evidence="1">DTBS</shortName>
    </alternativeName>
    <alternativeName>
        <fullName evidence="1">Dethiobiotin synthase</fullName>
    </alternativeName>
</protein>
<name>BIOD_LAWIP</name>
<feature type="chain" id="PRO_0000302515" description="ATP-dependent dethiobiotin synthetase BioD">
    <location>
        <begin position="1"/>
        <end position="203"/>
    </location>
</feature>
<feature type="active site" evidence="1">
    <location>
        <position position="31"/>
    </location>
</feature>
<feature type="binding site" evidence="1">
    <location>
        <begin position="11"/>
        <end position="16"/>
    </location>
    <ligand>
        <name>ATP</name>
        <dbReference type="ChEBI" id="CHEBI:30616"/>
    </ligand>
</feature>
<feature type="binding site" evidence="1">
    <location>
        <position position="15"/>
    </location>
    <ligand>
        <name>Mg(2+)</name>
        <dbReference type="ChEBI" id="CHEBI:18420"/>
    </ligand>
</feature>
<feature type="binding site" evidence="1">
    <location>
        <position position="35"/>
    </location>
    <ligand>
        <name>substrate</name>
    </ligand>
</feature>
<feature type="binding site" evidence="1">
    <location>
        <position position="42"/>
    </location>
    <ligand>
        <name>ATP</name>
        <dbReference type="ChEBI" id="CHEBI:30616"/>
    </ligand>
</feature>
<feature type="binding site" evidence="1">
    <location>
        <position position="42"/>
    </location>
    <ligand>
        <name>Mg(2+)</name>
        <dbReference type="ChEBI" id="CHEBI:18420"/>
    </ligand>
</feature>
<feature type="binding site" evidence="1">
    <location>
        <begin position="94"/>
        <end position="97"/>
    </location>
    <ligand>
        <name>ATP</name>
        <dbReference type="ChEBI" id="CHEBI:30616"/>
    </ligand>
</feature>
<feature type="binding site" evidence="1">
    <location>
        <position position="94"/>
    </location>
    <ligand>
        <name>Mg(2+)</name>
        <dbReference type="ChEBI" id="CHEBI:18420"/>
    </ligand>
</feature>
<keyword id="KW-0067">ATP-binding</keyword>
<keyword id="KW-0093">Biotin biosynthesis</keyword>
<keyword id="KW-0963">Cytoplasm</keyword>
<keyword id="KW-0436">Ligase</keyword>
<keyword id="KW-0460">Magnesium</keyword>
<keyword id="KW-0479">Metal-binding</keyword>
<keyword id="KW-0547">Nucleotide-binding</keyword>
<keyword id="KW-1185">Reference proteome</keyword>
<comment type="function">
    <text evidence="1">Catalyzes a mechanistically unusual reaction, the ATP-dependent insertion of CO2 between the N7 and N8 nitrogen atoms of 7,8-diaminopelargonic acid (DAPA, also called 7,8-diammoniononanoate) to form a ureido ring.</text>
</comment>
<comment type="catalytic activity">
    <reaction evidence="1">
        <text>(7R,8S)-7,8-diammoniononanoate + CO2 + ATP = (4R,5S)-dethiobiotin + ADP + phosphate + 3 H(+)</text>
        <dbReference type="Rhea" id="RHEA:15805"/>
        <dbReference type="ChEBI" id="CHEBI:15378"/>
        <dbReference type="ChEBI" id="CHEBI:16526"/>
        <dbReference type="ChEBI" id="CHEBI:30616"/>
        <dbReference type="ChEBI" id="CHEBI:43474"/>
        <dbReference type="ChEBI" id="CHEBI:149469"/>
        <dbReference type="ChEBI" id="CHEBI:149473"/>
        <dbReference type="ChEBI" id="CHEBI:456216"/>
        <dbReference type="EC" id="6.3.3.3"/>
    </reaction>
</comment>
<comment type="cofactor">
    <cofactor evidence="1">
        <name>Mg(2+)</name>
        <dbReference type="ChEBI" id="CHEBI:18420"/>
    </cofactor>
</comment>
<comment type="pathway">
    <text evidence="1">Cofactor biosynthesis; biotin biosynthesis; biotin from 7,8-diaminononanoate: step 1/2.</text>
</comment>
<comment type="subunit">
    <text evidence="1">Homodimer.</text>
</comment>
<comment type="subcellular location">
    <subcellularLocation>
        <location evidence="1">Cytoplasm</location>
    </subcellularLocation>
</comment>
<comment type="similarity">
    <text evidence="1">Belongs to the dethiobiotin synthetase family.</text>
</comment>
<organism>
    <name type="scientific">Lawsonia intracellularis (strain PHE/MN1-00)</name>
    <dbReference type="NCBI Taxonomy" id="363253"/>
    <lineage>
        <taxon>Bacteria</taxon>
        <taxon>Pseudomonadati</taxon>
        <taxon>Thermodesulfobacteriota</taxon>
        <taxon>Desulfovibrionia</taxon>
        <taxon>Desulfovibrionales</taxon>
        <taxon>Desulfovibrionaceae</taxon>
        <taxon>Lawsonia</taxon>
    </lineage>
</organism>
<accession>Q1MR97</accession>
<evidence type="ECO:0000255" key="1">
    <source>
        <dbReference type="HAMAP-Rule" id="MF_00336"/>
    </source>
</evidence>
<sequence length="203" mass="22618">MQFFIIGTDTNVGKTIVSSWLCLHTAYDYFKMIQTGSINGTDSDILKKLTYSKIHKEAYCYKEPLSPHLAAKLEQDEININNIILPNASNLVIEGAGGLLVPINQQYLLLDIISYLMLPVILVTHSRLGTINHTLLTLQALKSKGIEVVGVIVNGKPNQDNCDAITWYGKTTILAQFPFLSTITKTTLRNIPLTQELKQLFIV</sequence>